<evidence type="ECO:0000250" key="1"/>
<evidence type="ECO:0000255" key="2">
    <source>
        <dbReference type="PROSITE-ProRule" id="PRU01319"/>
    </source>
</evidence>
<evidence type="ECO:0000305" key="3"/>
<keyword id="KW-0963">Cytoplasm</keyword>
<keyword id="KW-0255">Endonuclease</keyword>
<keyword id="KW-0378">Hydrolase</keyword>
<keyword id="KW-0464">Manganese</keyword>
<keyword id="KW-0479">Metal-binding</keyword>
<keyword id="KW-0540">Nuclease</keyword>
<keyword id="KW-1185">Reference proteome</keyword>
<organism>
    <name type="scientific">Methanothermobacter thermautotrophicus (strain ATCC 29096 / DSM 1053 / JCM 10044 / NBRC 100330 / Delta H)</name>
    <name type="common">Methanobacterium thermoautotrophicum</name>
    <dbReference type="NCBI Taxonomy" id="187420"/>
    <lineage>
        <taxon>Archaea</taxon>
        <taxon>Methanobacteriati</taxon>
        <taxon>Methanobacteriota</taxon>
        <taxon>Methanomada group</taxon>
        <taxon>Methanobacteria</taxon>
        <taxon>Methanobacteriales</taxon>
        <taxon>Methanobacteriaceae</taxon>
        <taxon>Methanothermobacter</taxon>
    </lineage>
</organism>
<dbReference type="EC" id="3.1.26.4"/>
<dbReference type="EMBL" id="AE000666">
    <property type="protein sequence ID" value="AAB85519.1"/>
    <property type="molecule type" value="Genomic_DNA"/>
</dbReference>
<dbReference type="PIR" id="E69003">
    <property type="entry name" value="E69003"/>
</dbReference>
<dbReference type="RefSeq" id="WP_010876654.1">
    <property type="nucleotide sequence ID" value="NC_000916.1"/>
</dbReference>
<dbReference type="SMR" id="O27102"/>
<dbReference type="FunCoup" id="O27102">
    <property type="interactions" value="114"/>
</dbReference>
<dbReference type="STRING" id="187420.MTH_1023"/>
<dbReference type="PaxDb" id="187420-MTH_1023"/>
<dbReference type="EnsemblBacteria" id="AAB85519">
    <property type="protein sequence ID" value="AAB85519"/>
    <property type="gene ID" value="MTH_1023"/>
</dbReference>
<dbReference type="GeneID" id="1471431"/>
<dbReference type="KEGG" id="mth:MTH_1023"/>
<dbReference type="PATRIC" id="fig|187420.15.peg.1006"/>
<dbReference type="HOGENOM" id="CLU_036532_0_4_2"/>
<dbReference type="InParanoid" id="O27102"/>
<dbReference type="Proteomes" id="UP000005223">
    <property type="component" value="Chromosome"/>
</dbReference>
<dbReference type="GO" id="GO:0005737">
    <property type="term" value="C:cytoplasm"/>
    <property type="evidence" value="ECO:0007669"/>
    <property type="project" value="UniProtKB-SubCell"/>
</dbReference>
<dbReference type="GO" id="GO:0032299">
    <property type="term" value="C:ribonuclease H2 complex"/>
    <property type="evidence" value="ECO:0007669"/>
    <property type="project" value="TreeGrafter"/>
</dbReference>
<dbReference type="GO" id="GO:0030145">
    <property type="term" value="F:manganese ion binding"/>
    <property type="evidence" value="ECO:0007669"/>
    <property type="project" value="UniProtKB-UniRule"/>
</dbReference>
<dbReference type="GO" id="GO:0003723">
    <property type="term" value="F:RNA binding"/>
    <property type="evidence" value="ECO:0007669"/>
    <property type="project" value="InterPro"/>
</dbReference>
<dbReference type="GO" id="GO:0004523">
    <property type="term" value="F:RNA-DNA hybrid ribonuclease activity"/>
    <property type="evidence" value="ECO:0007669"/>
    <property type="project" value="UniProtKB-UniRule"/>
</dbReference>
<dbReference type="GO" id="GO:0043137">
    <property type="term" value="P:DNA replication, removal of RNA primer"/>
    <property type="evidence" value="ECO:0007669"/>
    <property type="project" value="TreeGrafter"/>
</dbReference>
<dbReference type="GO" id="GO:0006298">
    <property type="term" value="P:mismatch repair"/>
    <property type="evidence" value="ECO:0007669"/>
    <property type="project" value="TreeGrafter"/>
</dbReference>
<dbReference type="CDD" id="cd07180">
    <property type="entry name" value="RNase_HII_archaea_like"/>
    <property type="match status" value="1"/>
</dbReference>
<dbReference type="Gene3D" id="3.30.420.10">
    <property type="entry name" value="Ribonuclease H-like superfamily/Ribonuclease H"/>
    <property type="match status" value="1"/>
</dbReference>
<dbReference type="Gene3D" id="1.10.10.460">
    <property type="entry name" value="Ribonuclease hii. Domain 2"/>
    <property type="match status" value="1"/>
</dbReference>
<dbReference type="HAMAP" id="MF_00052_A">
    <property type="entry name" value="RNase_HII_A"/>
    <property type="match status" value="1"/>
</dbReference>
<dbReference type="InterPro" id="IPR004649">
    <property type="entry name" value="RNase_H2_suA"/>
</dbReference>
<dbReference type="InterPro" id="IPR001352">
    <property type="entry name" value="RNase_HII/HIII"/>
</dbReference>
<dbReference type="InterPro" id="IPR024567">
    <property type="entry name" value="RNase_HII/HIII_dom"/>
</dbReference>
<dbReference type="InterPro" id="IPR020787">
    <property type="entry name" value="RNase_HII_arc"/>
</dbReference>
<dbReference type="InterPro" id="IPR023160">
    <property type="entry name" value="RNase_HII_hlx-loop-hlx_cap_dom"/>
</dbReference>
<dbReference type="InterPro" id="IPR012337">
    <property type="entry name" value="RNaseH-like_sf"/>
</dbReference>
<dbReference type="InterPro" id="IPR036397">
    <property type="entry name" value="RNaseH_sf"/>
</dbReference>
<dbReference type="NCBIfam" id="TIGR00729">
    <property type="entry name" value="ribonuclease HII"/>
    <property type="match status" value="1"/>
</dbReference>
<dbReference type="PANTHER" id="PTHR10954:SF23">
    <property type="entry name" value="RIBONUCLEASE"/>
    <property type="match status" value="1"/>
</dbReference>
<dbReference type="PANTHER" id="PTHR10954">
    <property type="entry name" value="RIBONUCLEASE H2 SUBUNIT A"/>
    <property type="match status" value="1"/>
</dbReference>
<dbReference type="Pfam" id="PF01351">
    <property type="entry name" value="RNase_HII"/>
    <property type="match status" value="1"/>
</dbReference>
<dbReference type="SUPFAM" id="SSF53098">
    <property type="entry name" value="Ribonuclease H-like"/>
    <property type="match status" value="1"/>
</dbReference>
<dbReference type="PROSITE" id="PS51975">
    <property type="entry name" value="RNASE_H_2"/>
    <property type="match status" value="1"/>
</dbReference>
<gene>
    <name type="primary">rnhB</name>
    <name type="ordered locus">MTH_1023</name>
</gene>
<reference key="1">
    <citation type="journal article" date="1997" name="J. Bacteriol.">
        <title>Complete genome sequence of Methanobacterium thermoautotrophicum deltaH: functional analysis and comparative genomics.</title>
        <authorList>
            <person name="Smith D.R."/>
            <person name="Doucette-Stamm L.A."/>
            <person name="Deloughery C."/>
            <person name="Lee H.-M."/>
            <person name="Dubois J."/>
            <person name="Aldredge T."/>
            <person name="Bashirzadeh R."/>
            <person name="Blakely D."/>
            <person name="Cook R."/>
            <person name="Gilbert K."/>
            <person name="Harrison D."/>
            <person name="Hoang L."/>
            <person name="Keagle P."/>
            <person name="Lumm W."/>
            <person name="Pothier B."/>
            <person name="Qiu D."/>
            <person name="Spadafora R."/>
            <person name="Vicare R."/>
            <person name="Wang Y."/>
            <person name="Wierzbowski J."/>
            <person name="Gibson R."/>
            <person name="Jiwani N."/>
            <person name="Caruso A."/>
            <person name="Bush D."/>
            <person name="Safer H."/>
            <person name="Patwell D."/>
            <person name="Prabhakar S."/>
            <person name="McDougall S."/>
            <person name="Shimer G."/>
            <person name="Goyal A."/>
            <person name="Pietrovski S."/>
            <person name="Church G.M."/>
            <person name="Daniels C.J."/>
            <person name="Mao J.-I."/>
            <person name="Rice P."/>
            <person name="Noelling J."/>
            <person name="Reeve J.N."/>
        </authorList>
    </citation>
    <scope>NUCLEOTIDE SEQUENCE [LARGE SCALE GENOMIC DNA]</scope>
    <source>
        <strain>ATCC 29096 / DSM 1053 / JCM 10044 / NBRC 100330 / Delta H</strain>
    </source>
</reference>
<feature type="chain" id="PRO_0000111666" description="Ribonuclease HII">
    <location>
        <begin position="1"/>
        <end position="206"/>
    </location>
</feature>
<feature type="domain" description="RNase H type-2" evidence="2">
    <location>
        <begin position="1"/>
        <end position="206"/>
    </location>
</feature>
<feature type="binding site" evidence="1">
    <location>
        <position position="7"/>
    </location>
    <ligand>
        <name>a divalent metal cation</name>
        <dbReference type="ChEBI" id="CHEBI:60240"/>
    </ligand>
</feature>
<feature type="binding site" evidence="1">
    <location>
        <position position="8"/>
    </location>
    <ligand>
        <name>a divalent metal cation</name>
        <dbReference type="ChEBI" id="CHEBI:60240"/>
    </ligand>
</feature>
<feature type="binding site" evidence="1">
    <location>
        <position position="105"/>
    </location>
    <ligand>
        <name>a divalent metal cation</name>
        <dbReference type="ChEBI" id="CHEBI:60240"/>
    </ligand>
</feature>
<proteinExistence type="inferred from homology"/>
<comment type="function">
    <text evidence="1">Endonuclease that specifically degrades the RNA of RNA-DNA hybrids.</text>
</comment>
<comment type="catalytic activity">
    <reaction>
        <text>Endonucleolytic cleavage to 5'-phosphomonoester.</text>
        <dbReference type="EC" id="3.1.26.4"/>
    </reaction>
</comment>
<comment type="cofactor">
    <cofactor evidence="1">
        <name>Mn(2+)</name>
        <dbReference type="ChEBI" id="CHEBI:29035"/>
    </cofactor>
    <cofactor evidence="1">
        <name>Mg(2+)</name>
        <dbReference type="ChEBI" id="CHEBI:18420"/>
    </cofactor>
    <text evidence="1">Manganese or magnesium. Binds 1 divalent metal ion per monomer in the absence of substrate. May bind a second metal ion after substrate binding.</text>
</comment>
<comment type="subcellular location">
    <subcellularLocation>
        <location evidence="3">Cytoplasm</location>
    </subcellularLocation>
</comment>
<comment type="similarity">
    <text evidence="3">Belongs to the RNase HII family.</text>
</comment>
<accession>O27102</accession>
<name>RNH2_METTH</name>
<sequence>MKVLGIDEAGRGPVIGPLVVAGVMIPERKFSILRKMGVKDSKKLTPERRRFLARKIRRIARVFTVKISASDIDRMRERGFNLNEIEKIAIKRIIPEAQPDRVIIDSVDVKPERLEEEIRSHFGEIEVTAEHGADTRYYPVAAASIIAKVERDLEIESIQKKNRKLGDIGSGYPSDPRTREFLESFTYDELPDFVRRSWATVQKKKQ</sequence>
<protein>
    <recommendedName>
        <fullName>Ribonuclease HII</fullName>
        <shortName>RNase HII</shortName>
        <ecNumber>3.1.26.4</ecNumber>
    </recommendedName>
</protein>